<keyword id="KW-0687">Ribonucleoprotein</keyword>
<keyword id="KW-0689">Ribosomal protein</keyword>
<accession>B1IQ00</accession>
<comment type="similarity">
    <text evidence="1">Belongs to the bacterial ribosomal protein bL36 family.</text>
</comment>
<protein>
    <recommendedName>
        <fullName evidence="1">Large ribosomal subunit protein bL36A</fullName>
    </recommendedName>
    <alternativeName>
        <fullName evidence="2">50S ribosomal protein L36 1</fullName>
    </alternativeName>
</protein>
<reference key="1">
    <citation type="submission" date="2008-02" db="EMBL/GenBank/DDBJ databases">
        <title>Complete sequence of Escherichia coli C str. ATCC 8739.</title>
        <authorList>
            <person name="Copeland A."/>
            <person name="Lucas S."/>
            <person name="Lapidus A."/>
            <person name="Glavina del Rio T."/>
            <person name="Dalin E."/>
            <person name="Tice H."/>
            <person name="Bruce D."/>
            <person name="Goodwin L."/>
            <person name="Pitluck S."/>
            <person name="Kiss H."/>
            <person name="Brettin T."/>
            <person name="Detter J.C."/>
            <person name="Han C."/>
            <person name="Kuske C.R."/>
            <person name="Schmutz J."/>
            <person name="Larimer F."/>
            <person name="Land M."/>
            <person name="Hauser L."/>
            <person name="Kyrpides N."/>
            <person name="Mikhailova N."/>
            <person name="Ingram L."/>
            <person name="Richardson P."/>
        </authorList>
    </citation>
    <scope>NUCLEOTIDE SEQUENCE [LARGE SCALE GENOMIC DNA]</scope>
    <source>
        <strain>ATCC 8739 / DSM 1576 / NBRC 3972 / NCIMB 8545 / WDCM 00012 / Crooks</strain>
    </source>
</reference>
<name>RL361_ECOLC</name>
<gene>
    <name evidence="1" type="primary">rpmJ1</name>
    <name type="ordered locus">EcolC_0414</name>
</gene>
<organism>
    <name type="scientific">Escherichia coli (strain ATCC 8739 / DSM 1576 / NBRC 3972 / NCIMB 8545 / WDCM 00012 / Crooks)</name>
    <dbReference type="NCBI Taxonomy" id="481805"/>
    <lineage>
        <taxon>Bacteria</taxon>
        <taxon>Pseudomonadati</taxon>
        <taxon>Pseudomonadota</taxon>
        <taxon>Gammaproteobacteria</taxon>
        <taxon>Enterobacterales</taxon>
        <taxon>Enterobacteriaceae</taxon>
        <taxon>Escherichia</taxon>
    </lineage>
</organism>
<sequence>MKVRASVKKLCRNCKIVKRDGVIRVICSAEPKHKQRQG</sequence>
<dbReference type="EMBL" id="CP000946">
    <property type="protein sequence ID" value="ACA76092.1"/>
    <property type="molecule type" value="Genomic_DNA"/>
</dbReference>
<dbReference type="SMR" id="B1IQ00"/>
<dbReference type="KEGG" id="ecl:EcolC_0414"/>
<dbReference type="HOGENOM" id="CLU_135723_6_2_6"/>
<dbReference type="GO" id="GO:0005737">
    <property type="term" value="C:cytoplasm"/>
    <property type="evidence" value="ECO:0007669"/>
    <property type="project" value="UniProtKB-ARBA"/>
</dbReference>
<dbReference type="GO" id="GO:1990904">
    <property type="term" value="C:ribonucleoprotein complex"/>
    <property type="evidence" value="ECO:0007669"/>
    <property type="project" value="UniProtKB-KW"/>
</dbReference>
<dbReference type="GO" id="GO:0005840">
    <property type="term" value="C:ribosome"/>
    <property type="evidence" value="ECO:0007669"/>
    <property type="project" value="UniProtKB-KW"/>
</dbReference>
<dbReference type="GO" id="GO:0003735">
    <property type="term" value="F:structural constituent of ribosome"/>
    <property type="evidence" value="ECO:0007669"/>
    <property type="project" value="InterPro"/>
</dbReference>
<dbReference type="GO" id="GO:0006412">
    <property type="term" value="P:translation"/>
    <property type="evidence" value="ECO:0007669"/>
    <property type="project" value="UniProtKB-UniRule"/>
</dbReference>
<dbReference type="HAMAP" id="MF_00251">
    <property type="entry name" value="Ribosomal_bL36"/>
    <property type="match status" value="1"/>
</dbReference>
<dbReference type="InterPro" id="IPR000473">
    <property type="entry name" value="Ribosomal_bL36"/>
</dbReference>
<dbReference type="InterPro" id="IPR035977">
    <property type="entry name" value="Ribosomal_bL36_sp"/>
</dbReference>
<dbReference type="NCBIfam" id="TIGR01022">
    <property type="entry name" value="rpmJ_bact"/>
    <property type="match status" value="1"/>
</dbReference>
<dbReference type="PANTHER" id="PTHR42888">
    <property type="entry name" value="50S RIBOSOMAL PROTEIN L36, CHLOROPLASTIC"/>
    <property type="match status" value="1"/>
</dbReference>
<dbReference type="PANTHER" id="PTHR42888:SF1">
    <property type="entry name" value="LARGE RIBOSOMAL SUBUNIT PROTEIN BL36C"/>
    <property type="match status" value="1"/>
</dbReference>
<dbReference type="Pfam" id="PF00444">
    <property type="entry name" value="Ribosomal_L36"/>
    <property type="match status" value="1"/>
</dbReference>
<dbReference type="SUPFAM" id="SSF57840">
    <property type="entry name" value="Ribosomal protein L36"/>
    <property type="match status" value="1"/>
</dbReference>
<dbReference type="PROSITE" id="PS00828">
    <property type="entry name" value="RIBOSOMAL_L36"/>
    <property type="match status" value="1"/>
</dbReference>
<proteinExistence type="inferred from homology"/>
<feature type="chain" id="PRO_0000344668" description="Large ribosomal subunit protein bL36A">
    <location>
        <begin position="1"/>
        <end position="38"/>
    </location>
</feature>
<evidence type="ECO:0000255" key="1">
    <source>
        <dbReference type="HAMAP-Rule" id="MF_00251"/>
    </source>
</evidence>
<evidence type="ECO:0000305" key="2"/>